<keyword id="KW-0378">Hydrolase</keyword>
<keyword id="KW-0479">Metal-binding</keyword>
<keyword id="KW-0665">Pyrimidine biosynthesis</keyword>
<keyword id="KW-1185">Reference proteome</keyword>
<keyword id="KW-0862">Zinc</keyword>
<dbReference type="EC" id="3.5.2.3" evidence="1"/>
<dbReference type="EMBL" id="CP000127">
    <property type="protein sequence ID" value="ABA58974.1"/>
    <property type="molecule type" value="Genomic_DNA"/>
</dbReference>
<dbReference type="RefSeq" id="WP_004269126.1">
    <property type="nucleotide sequence ID" value="NC_007484.1"/>
</dbReference>
<dbReference type="SMR" id="Q3J872"/>
<dbReference type="FunCoup" id="Q3J872">
    <property type="interactions" value="444"/>
</dbReference>
<dbReference type="STRING" id="323261.Noc_2521"/>
<dbReference type="KEGG" id="noc:Noc_2521"/>
<dbReference type="eggNOG" id="COG0418">
    <property type="taxonomic scope" value="Bacteria"/>
</dbReference>
<dbReference type="HOGENOM" id="CLU_041558_1_0_6"/>
<dbReference type="InParanoid" id="Q3J872"/>
<dbReference type="UniPathway" id="UPA00070">
    <property type="reaction ID" value="UER00117"/>
</dbReference>
<dbReference type="Proteomes" id="UP000006838">
    <property type="component" value="Chromosome"/>
</dbReference>
<dbReference type="GO" id="GO:0005829">
    <property type="term" value="C:cytosol"/>
    <property type="evidence" value="ECO:0007669"/>
    <property type="project" value="TreeGrafter"/>
</dbReference>
<dbReference type="GO" id="GO:0004151">
    <property type="term" value="F:dihydroorotase activity"/>
    <property type="evidence" value="ECO:0007669"/>
    <property type="project" value="UniProtKB-UniRule"/>
</dbReference>
<dbReference type="GO" id="GO:0008270">
    <property type="term" value="F:zinc ion binding"/>
    <property type="evidence" value="ECO:0007669"/>
    <property type="project" value="UniProtKB-UniRule"/>
</dbReference>
<dbReference type="GO" id="GO:0006207">
    <property type="term" value="P:'de novo' pyrimidine nucleobase biosynthetic process"/>
    <property type="evidence" value="ECO:0007669"/>
    <property type="project" value="TreeGrafter"/>
</dbReference>
<dbReference type="GO" id="GO:0044205">
    <property type="term" value="P:'de novo' UMP biosynthetic process"/>
    <property type="evidence" value="ECO:0007669"/>
    <property type="project" value="UniProtKB-UniRule"/>
</dbReference>
<dbReference type="CDD" id="cd01294">
    <property type="entry name" value="DHOase"/>
    <property type="match status" value="1"/>
</dbReference>
<dbReference type="FunFam" id="3.20.20.140:FF:000006">
    <property type="entry name" value="Dihydroorotase"/>
    <property type="match status" value="1"/>
</dbReference>
<dbReference type="Gene3D" id="3.20.20.140">
    <property type="entry name" value="Metal-dependent hydrolases"/>
    <property type="match status" value="1"/>
</dbReference>
<dbReference type="HAMAP" id="MF_00219">
    <property type="entry name" value="PyrC_classII"/>
    <property type="match status" value="1"/>
</dbReference>
<dbReference type="InterPro" id="IPR006680">
    <property type="entry name" value="Amidohydro-rel"/>
</dbReference>
<dbReference type="InterPro" id="IPR004721">
    <property type="entry name" value="DHOdimr"/>
</dbReference>
<dbReference type="InterPro" id="IPR002195">
    <property type="entry name" value="Dihydroorotase_CS"/>
</dbReference>
<dbReference type="InterPro" id="IPR032466">
    <property type="entry name" value="Metal_Hydrolase"/>
</dbReference>
<dbReference type="NCBIfam" id="TIGR00856">
    <property type="entry name" value="pyrC_dimer"/>
    <property type="match status" value="1"/>
</dbReference>
<dbReference type="PANTHER" id="PTHR43137">
    <property type="entry name" value="DIHYDROOROTASE"/>
    <property type="match status" value="1"/>
</dbReference>
<dbReference type="PANTHER" id="PTHR43137:SF1">
    <property type="entry name" value="DIHYDROOROTASE"/>
    <property type="match status" value="1"/>
</dbReference>
<dbReference type="Pfam" id="PF01979">
    <property type="entry name" value="Amidohydro_1"/>
    <property type="match status" value="1"/>
</dbReference>
<dbReference type="PIRSF" id="PIRSF001237">
    <property type="entry name" value="DHOdimr"/>
    <property type="match status" value="1"/>
</dbReference>
<dbReference type="SUPFAM" id="SSF51556">
    <property type="entry name" value="Metallo-dependent hydrolases"/>
    <property type="match status" value="1"/>
</dbReference>
<dbReference type="PROSITE" id="PS00482">
    <property type="entry name" value="DIHYDROOROTASE_1"/>
    <property type="match status" value="1"/>
</dbReference>
<dbReference type="PROSITE" id="PS00483">
    <property type="entry name" value="DIHYDROOROTASE_2"/>
    <property type="match status" value="1"/>
</dbReference>
<name>PYRC_NITOC</name>
<accession>Q3J872</accession>
<protein>
    <recommendedName>
        <fullName evidence="1">Dihydroorotase</fullName>
        <shortName evidence="1">DHOase</shortName>
        <ecNumber evidence="1">3.5.2.3</ecNumber>
    </recommendedName>
</protein>
<evidence type="ECO:0000255" key="1">
    <source>
        <dbReference type="HAMAP-Rule" id="MF_00219"/>
    </source>
</evidence>
<feature type="chain" id="PRO_1000024026" description="Dihydroorotase">
    <location>
        <begin position="1"/>
        <end position="345"/>
    </location>
</feature>
<feature type="active site" evidence="1">
    <location>
        <position position="248"/>
    </location>
</feature>
<feature type="binding site" evidence="1">
    <location>
        <position position="14"/>
    </location>
    <ligand>
        <name>Zn(2+)</name>
        <dbReference type="ChEBI" id="CHEBI:29105"/>
        <label>1</label>
    </ligand>
</feature>
<feature type="binding site" evidence="1">
    <location>
        <begin position="16"/>
        <end position="18"/>
    </location>
    <ligand>
        <name>substrate</name>
    </ligand>
</feature>
<feature type="binding site" evidence="1">
    <location>
        <position position="16"/>
    </location>
    <ligand>
        <name>Zn(2+)</name>
        <dbReference type="ChEBI" id="CHEBI:29105"/>
        <label>1</label>
    </ligand>
</feature>
<feature type="binding site" evidence="1">
    <location>
        <position position="42"/>
    </location>
    <ligand>
        <name>substrate</name>
    </ligand>
</feature>
<feature type="binding site" description="via carbamate group" evidence="1">
    <location>
        <position position="100"/>
    </location>
    <ligand>
        <name>Zn(2+)</name>
        <dbReference type="ChEBI" id="CHEBI:29105"/>
        <label>1</label>
    </ligand>
</feature>
<feature type="binding site" description="via carbamate group" evidence="1">
    <location>
        <position position="100"/>
    </location>
    <ligand>
        <name>Zn(2+)</name>
        <dbReference type="ChEBI" id="CHEBI:29105"/>
        <label>2</label>
    </ligand>
</feature>
<feature type="binding site" evidence="1">
    <location>
        <position position="137"/>
    </location>
    <ligand>
        <name>substrate</name>
    </ligand>
</feature>
<feature type="binding site" evidence="1">
    <location>
        <position position="137"/>
    </location>
    <ligand>
        <name>Zn(2+)</name>
        <dbReference type="ChEBI" id="CHEBI:29105"/>
        <label>2</label>
    </ligand>
</feature>
<feature type="binding site" evidence="1">
    <location>
        <position position="175"/>
    </location>
    <ligand>
        <name>Zn(2+)</name>
        <dbReference type="ChEBI" id="CHEBI:29105"/>
        <label>2</label>
    </ligand>
</feature>
<feature type="binding site" evidence="1">
    <location>
        <position position="220"/>
    </location>
    <ligand>
        <name>substrate</name>
    </ligand>
</feature>
<feature type="binding site" evidence="1">
    <location>
        <position position="248"/>
    </location>
    <ligand>
        <name>Zn(2+)</name>
        <dbReference type="ChEBI" id="CHEBI:29105"/>
        <label>1</label>
    </ligand>
</feature>
<feature type="binding site" evidence="1">
    <location>
        <position position="252"/>
    </location>
    <ligand>
        <name>substrate</name>
    </ligand>
</feature>
<feature type="binding site" evidence="1">
    <location>
        <position position="264"/>
    </location>
    <ligand>
        <name>substrate</name>
    </ligand>
</feature>
<feature type="modified residue" description="N6-carboxylysine" evidence="1">
    <location>
        <position position="100"/>
    </location>
</feature>
<sequence length="345" mass="38245">MVTTLQLTRPDDWHLHLRDGKMLTDIVPATGRRFARAIIMPNLRPPITTTTQALAYRKRILAAQPKNLDFEPLMTLYLTDNTIPEEITRARDSGHIYAVKLYPAGATTNADFGVTCLHKLYPVLEALQQQQLPLLIHGEVTDPAVDIFDRERVFIESHLIPLLHDFPALRVVLEHITTQEAVDFIEAAPPNIAATITPHHLLFNRNALLAGGIQPHYYCLPVLKREIHRQALVAAATSGNPKFFLGTDSAPHAKTAKETACGCAGIYSSHAALELYAEAFEEASALEKLEAFASFHGPDFYGLPRNQDTVTLIKTPWQVPESLPYGDDALIPLRGGTTVAWRLAE</sequence>
<reference key="1">
    <citation type="journal article" date="2006" name="Appl. Environ. Microbiol.">
        <title>Complete genome sequence of the marine, chemolithoautotrophic, ammonia-oxidizing bacterium Nitrosococcus oceani ATCC 19707.</title>
        <authorList>
            <person name="Klotz M.G."/>
            <person name="Arp D.J."/>
            <person name="Chain P.S.G."/>
            <person name="El-Sheikh A.F."/>
            <person name="Hauser L.J."/>
            <person name="Hommes N.G."/>
            <person name="Larimer F.W."/>
            <person name="Malfatti S.A."/>
            <person name="Norton J.M."/>
            <person name="Poret-Peterson A.T."/>
            <person name="Vergez L.M."/>
            <person name="Ward B.B."/>
        </authorList>
    </citation>
    <scope>NUCLEOTIDE SEQUENCE [LARGE SCALE GENOMIC DNA]</scope>
    <source>
        <strain>ATCC 19707 / BCRC 17464 / JCM 30415 / NCIMB 11848 / C-107</strain>
    </source>
</reference>
<comment type="function">
    <text evidence="1">Catalyzes the reversible cyclization of carbamoyl aspartate to dihydroorotate.</text>
</comment>
<comment type="catalytic activity">
    <reaction evidence="1">
        <text>(S)-dihydroorotate + H2O = N-carbamoyl-L-aspartate + H(+)</text>
        <dbReference type="Rhea" id="RHEA:24296"/>
        <dbReference type="ChEBI" id="CHEBI:15377"/>
        <dbReference type="ChEBI" id="CHEBI:15378"/>
        <dbReference type="ChEBI" id="CHEBI:30864"/>
        <dbReference type="ChEBI" id="CHEBI:32814"/>
        <dbReference type="EC" id="3.5.2.3"/>
    </reaction>
</comment>
<comment type="cofactor">
    <cofactor evidence="1">
        <name>Zn(2+)</name>
        <dbReference type="ChEBI" id="CHEBI:29105"/>
    </cofactor>
    <text evidence="1">Binds 2 Zn(2+) ions per subunit.</text>
</comment>
<comment type="pathway">
    <text evidence="1">Pyrimidine metabolism; UMP biosynthesis via de novo pathway; (S)-dihydroorotate from bicarbonate: step 3/3.</text>
</comment>
<comment type="subunit">
    <text evidence="1">Homodimer.</text>
</comment>
<comment type="similarity">
    <text evidence="1">Belongs to the metallo-dependent hydrolases superfamily. DHOase family. Class II DHOase subfamily.</text>
</comment>
<gene>
    <name evidence="1" type="primary">pyrC</name>
    <name type="ordered locus">Noc_2521</name>
</gene>
<organism>
    <name type="scientific">Nitrosococcus oceani (strain ATCC 19707 / BCRC 17464 / JCM 30415 / NCIMB 11848 / C-107)</name>
    <dbReference type="NCBI Taxonomy" id="323261"/>
    <lineage>
        <taxon>Bacteria</taxon>
        <taxon>Pseudomonadati</taxon>
        <taxon>Pseudomonadota</taxon>
        <taxon>Gammaproteobacteria</taxon>
        <taxon>Chromatiales</taxon>
        <taxon>Chromatiaceae</taxon>
        <taxon>Nitrosococcus</taxon>
    </lineage>
</organism>
<proteinExistence type="inferred from homology"/>